<evidence type="ECO:0000250" key="1"/>
<evidence type="ECO:0000250" key="2">
    <source>
        <dbReference type="UniProtKB" id="Q86YW7"/>
    </source>
</evidence>
<evidence type="ECO:0000255" key="3"/>
<evidence type="ECO:0000305" key="4"/>
<reference key="1">
    <citation type="submission" date="2002-01" db="EMBL/GenBank/DDBJ databases">
        <title>A novel glycoprotein hormone beta subunit.</title>
        <authorList>
            <person name="Feldhaus A."/>
            <person name="Holloway J.L."/>
            <person name="O'Hogan S.L."/>
            <person name="Tackett M."/>
            <person name="Taft D."/>
            <person name="Thayer E.C."/>
            <person name="Webster P."/>
        </authorList>
    </citation>
    <scope>NUCLEOTIDE SEQUENCE [MRNA]</scope>
    <source>
        <strain>129/SvJ</strain>
    </source>
</reference>
<reference key="2">
    <citation type="journal article" date="2005" name="Science">
        <title>The transcriptional landscape of the mammalian genome.</title>
        <authorList>
            <person name="Carninci P."/>
            <person name="Kasukawa T."/>
            <person name="Katayama S."/>
            <person name="Gough J."/>
            <person name="Frith M.C."/>
            <person name="Maeda N."/>
            <person name="Oyama R."/>
            <person name="Ravasi T."/>
            <person name="Lenhard B."/>
            <person name="Wells C."/>
            <person name="Kodzius R."/>
            <person name="Shimokawa K."/>
            <person name="Bajic V.B."/>
            <person name="Brenner S.E."/>
            <person name="Batalov S."/>
            <person name="Forrest A.R."/>
            <person name="Zavolan M."/>
            <person name="Davis M.J."/>
            <person name="Wilming L.G."/>
            <person name="Aidinis V."/>
            <person name="Allen J.E."/>
            <person name="Ambesi-Impiombato A."/>
            <person name="Apweiler R."/>
            <person name="Aturaliya R.N."/>
            <person name="Bailey T.L."/>
            <person name="Bansal M."/>
            <person name="Baxter L."/>
            <person name="Beisel K.W."/>
            <person name="Bersano T."/>
            <person name="Bono H."/>
            <person name="Chalk A.M."/>
            <person name="Chiu K.P."/>
            <person name="Choudhary V."/>
            <person name="Christoffels A."/>
            <person name="Clutterbuck D.R."/>
            <person name="Crowe M.L."/>
            <person name="Dalla E."/>
            <person name="Dalrymple B.P."/>
            <person name="de Bono B."/>
            <person name="Della Gatta G."/>
            <person name="di Bernardo D."/>
            <person name="Down T."/>
            <person name="Engstrom P."/>
            <person name="Fagiolini M."/>
            <person name="Faulkner G."/>
            <person name="Fletcher C.F."/>
            <person name="Fukushima T."/>
            <person name="Furuno M."/>
            <person name="Futaki S."/>
            <person name="Gariboldi M."/>
            <person name="Georgii-Hemming P."/>
            <person name="Gingeras T.R."/>
            <person name="Gojobori T."/>
            <person name="Green R.E."/>
            <person name="Gustincich S."/>
            <person name="Harbers M."/>
            <person name="Hayashi Y."/>
            <person name="Hensch T.K."/>
            <person name="Hirokawa N."/>
            <person name="Hill D."/>
            <person name="Huminiecki L."/>
            <person name="Iacono M."/>
            <person name="Ikeo K."/>
            <person name="Iwama A."/>
            <person name="Ishikawa T."/>
            <person name="Jakt M."/>
            <person name="Kanapin A."/>
            <person name="Katoh M."/>
            <person name="Kawasawa Y."/>
            <person name="Kelso J."/>
            <person name="Kitamura H."/>
            <person name="Kitano H."/>
            <person name="Kollias G."/>
            <person name="Krishnan S.P."/>
            <person name="Kruger A."/>
            <person name="Kummerfeld S.K."/>
            <person name="Kurochkin I.V."/>
            <person name="Lareau L.F."/>
            <person name="Lazarevic D."/>
            <person name="Lipovich L."/>
            <person name="Liu J."/>
            <person name="Liuni S."/>
            <person name="McWilliam S."/>
            <person name="Madan Babu M."/>
            <person name="Madera M."/>
            <person name="Marchionni L."/>
            <person name="Matsuda H."/>
            <person name="Matsuzawa S."/>
            <person name="Miki H."/>
            <person name="Mignone F."/>
            <person name="Miyake S."/>
            <person name="Morris K."/>
            <person name="Mottagui-Tabar S."/>
            <person name="Mulder N."/>
            <person name="Nakano N."/>
            <person name="Nakauchi H."/>
            <person name="Ng P."/>
            <person name="Nilsson R."/>
            <person name="Nishiguchi S."/>
            <person name="Nishikawa S."/>
            <person name="Nori F."/>
            <person name="Ohara O."/>
            <person name="Okazaki Y."/>
            <person name="Orlando V."/>
            <person name="Pang K.C."/>
            <person name="Pavan W.J."/>
            <person name="Pavesi G."/>
            <person name="Pesole G."/>
            <person name="Petrovsky N."/>
            <person name="Piazza S."/>
            <person name="Reed J."/>
            <person name="Reid J.F."/>
            <person name="Ring B.Z."/>
            <person name="Ringwald M."/>
            <person name="Rost B."/>
            <person name="Ruan Y."/>
            <person name="Salzberg S.L."/>
            <person name="Sandelin A."/>
            <person name="Schneider C."/>
            <person name="Schoenbach C."/>
            <person name="Sekiguchi K."/>
            <person name="Semple C.A."/>
            <person name="Seno S."/>
            <person name="Sessa L."/>
            <person name="Sheng Y."/>
            <person name="Shibata Y."/>
            <person name="Shimada H."/>
            <person name="Shimada K."/>
            <person name="Silva D."/>
            <person name="Sinclair B."/>
            <person name="Sperling S."/>
            <person name="Stupka E."/>
            <person name="Sugiura K."/>
            <person name="Sultana R."/>
            <person name="Takenaka Y."/>
            <person name="Taki K."/>
            <person name="Tammoja K."/>
            <person name="Tan S.L."/>
            <person name="Tang S."/>
            <person name="Taylor M.S."/>
            <person name="Tegner J."/>
            <person name="Teichmann S.A."/>
            <person name="Ueda H.R."/>
            <person name="van Nimwegen E."/>
            <person name="Verardo R."/>
            <person name="Wei C.L."/>
            <person name="Yagi K."/>
            <person name="Yamanishi H."/>
            <person name="Zabarovsky E."/>
            <person name="Zhu S."/>
            <person name="Zimmer A."/>
            <person name="Hide W."/>
            <person name="Bult C."/>
            <person name="Grimmond S.M."/>
            <person name="Teasdale R.D."/>
            <person name="Liu E.T."/>
            <person name="Brusic V."/>
            <person name="Quackenbush J."/>
            <person name="Wahlestedt C."/>
            <person name="Mattick J.S."/>
            <person name="Hume D.A."/>
            <person name="Kai C."/>
            <person name="Sasaki D."/>
            <person name="Tomaru Y."/>
            <person name="Fukuda S."/>
            <person name="Kanamori-Katayama M."/>
            <person name="Suzuki M."/>
            <person name="Aoki J."/>
            <person name="Arakawa T."/>
            <person name="Iida J."/>
            <person name="Imamura K."/>
            <person name="Itoh M."/>
            <person name="Kato T."/>
            <person name="Kawaji H."/>
            <person name="Kawagashira N."/>
            <person name="Kawashima T."/>
            <person name="Kojima M."/>
            <person name="Kondo S."/>
            <person name="Konno H."/>
            <person name="Nakano K."/>
            <person name="Ninomiya N."/>
            <person name="Nishio T."/>
            <person name="Okada M."/>
            <person name="Plessy C."/>
            <person name="Shibata K."/>
            <person name="Shiraki T."/>
            <person name="Suzuki S."/>
            <person name="Tagami M."/>
            <person name="Waki K."/>
            <person name="Watahiki A."/>
            <person name="Okamura-Oho Y."/>
            <person name="Suzuki H."/>
            <person name="Kawai J."/>
            <person name="Hayashizaki Y."/>
        </authorList>
    </citation>
    <scope>NUCLEOTIDE SEQUENCE [LARGE SCALE MRNA]</scope>
    <source>
        <strain>C57BL/6J</strain>
        <tissue>Eye</tissue>
    </source>
</reference>
<reference key="3">
    <citation type="journal article" date="2006" name="Mol. Endocrinol.">
        <title>A glycoprotein hormone expressed in corticotrophs exhibits unique binding properties on thyroid-stimulating hormone receptor.</title>
        <authorList>
            <person name="Okada S.L."/>
            <person name="Ellsworth J.L."/>
            <person name="Durnam D.M."/>
            <person name="Haugen H.S."/>
            <person name="Holloway J.L."/>
            <person name="Kelley M.L."/>
            <person name="Lewis K.E."/>
            <person name="Ren H."/>
            <person name="Sheppard P.O."/>
            <person name="Storey H.M."/>
            <person name="Waggie K.S."/>
            <person name="Wolf A.C."/>
            <person name="Yao L.Y."/>
            <person name="Webster P.J."/>
        </authorList>
    </citation>
    <scope>OVEREXPRESSION</scope>
</reference>
<keyword id="KW-1015">Disulfide bond</keyword>
<keyword id="KW-0325">Glycoprotein</keyword>
<keyword id="KW-0372">Hormone</keyword>
<keyword id="KW-1185">Reference proteome</keyword>
<keyword id="KW-0964">Secreted</keyword>
<keyword id="KW-0732">Signal</keyword>
<dbReference type="EMBL" id="AF467771">
    <property type="protein sequence ID" value="AAO33391.1"/>
    <property type="molecule type" value="mRNA"/>
</dbReference>
<dbReference type="EMBL" id="AK078727">
    <property type="status" value="NOT_ANNOTATED_CDS"/>
    <property type="molecule type" value="mRNA"/>
</dbReference>
<dbReference type="CCDS" id="CCDS25982.1"/>
<dbReference type="RefSeq" id="NP_783575.2">
    <property type="nucleotide sequence ID" value="NM_175644.3"/>
</dbReference>
<dbReference type="RefSeq" id="XP_017170513.1">
    <property type="nucleotide sequence ID" value="XM_017315024.1"/>
</dbReference>
<dbReference type="SMR" id="Q812B2"/>
<dbReference type="FunCoup" id="Q812B2">
    <property type="interactions" value="771"/>
</dbReference>
<dbReference type="STRING" id="10090.ENSMUSP00000061488"/>
<dbReference type="GlyCosmos" id="Q812B2">
    <property type="glycosylation" value="1 site, No reported glycans"/>
</dbReference>
<dbReference type="GlyGen" id="Q812B2">
    <property type="glycosylation" value="1 site"/>
</dbReference>
<dbReference type="PaxDb" id="10090-ENSMUSP00000061488"/>
<dbReference type="Antibodypedia" id="73167">
    <property type="antibodies" value="57 antibodies from 11 providers"/>
</dbReference>
<dbReference type="DNASU" id="217674"/>
<dbReference type="Ensembl" id="ENSMUST00000051079.4">
    <property type="protein sequence ID" value="ENSMUSP00000061488.3"/>
    <property type="gene ID" value="ENSMUSG00000048982.4"/>
</dbReference>
<dbReference type="GeneID" id="217674"/>
<dbReference type="KEGG" id="mmu:217674"/>
<dbReference type="UCSC" id="uc007nxd.1">
    <property type="organism name" value="mouse"/>
</dbReference>
<dbReference type="AGR" id="MGI:2156540"/>
<dbReference type="CTD" id="122876"/>
<dbReference type="MGI" id="MGI:2156540">
    <property type="gene designation" value="Gphb5"/>
</dbReference>
<dbReference type="VEuPathDB" id="HostDB:ENSMUSG00000048982"/>
<dbReference type="eggNOG" id="ENOG502RZ3V">
    <property type="taxonomic scope" value="Eukaryota"/>
</dbReference>
<dbReference type="GeneTree" id="ENSGT00730000111179"/>
<dbReference type="HOGENOM" id="CLU_126319_2_1_1"/>
<dbReference type="InParanoid" id="Q812B2"/>
<dbReference type="OMA" id="MAVRCDC"/>
<dbReference type="OrthoDB" id="10006958at2759"/>
<dbReference type="PhylomeDB" id="Q812B2"/>
<dbReference type="TreeFam" id="TF332940"/>
<dbReference type="Reactome" id="R-MMU-375281">
    <property type="pathway name" value="Hormone ligand-binding receptors"/>
</dbReference>
<dbReference type="Reactome" id="R-MMU-418555">
    <property type="pathway name" value="G alpha (s) signalling events"/>
</dbReference>
<dbReference type="BioGRID-ORCS" id="217674">
    <property type="hits" value="0 hits in 76 CRISPR screens"/>
</dbReference>
<dbReference type="PRO" id="PR:Q812B2"/>
<dbReference type="Proteomes" id="UP000000589">
    <property type="component" value="Chromosome 12"/>
</dbReference>
<dbReference type="RNAct" id="Q812B2">
    <property type="molecule type" value="protein"/>
</dbReference>
<dbReference type="Bgee" id="ENSMUSG00000048982">
    <property type="expression patterns" value="Expressed in mesodermal cell in embryo and 3 other cell types or tissues"/>
</dbReference>
<dbReference type="ExpressionAtlas" id="Q812B2">
    <property type="expression patterns" value="baseline and differential"/>
</dbReference>
<dbReference type="GO" id="GO:0005576">
    <property type="term" value="C:extracellular region"/>
    <property type="evidence" value="ECO:0007669"/>
    <property type="project" value="UniProtKB-SubCell"/>
</dbReference>
<dbReference type="GO" id="GO:0005179">
    <property type="term" value="F:hormone activity"/>
    <property type="evidence" value="ECO:0007669"/>
    <property type="project" value="UniProtKB-KW"/>
</dbReference>
<dbReference type="GO" id="GO:0046982">
    <property type="term" value="F:protein heterodimerization activity"/>
    <property type="evidence" value="ECO:0007669"/>
    <property type="project" value="Ensembl"/>
</dbReference>
<dbReference type="GO" id="GO:0031531">
    <property type="term" value="F:thyrotropin-releasing hormone receptor binding"/>
    <property type="evidence" value="ECO:0007669"/>
    <property type="project" value="Ensembl"/>
</dbReference>
<dbReference type="GO" id="GO:0007189">
    <property type="term" value="P:adenylate cyclase-activating G protein-coupled receptor signaling pathway"/>
    <property type="evidence" value="ECO:0007669"/>
    <property type="project" value="Ensembl"/>
</dbReference>
<dbReference type="GO" id="GO:0002155">
    <property type="term" value="P:regulation of thyroid hormone receptor signaling pathway"/>
    <property type="evidence" value="ECO:0000315"/>
    <property type="project" value="MGI"/>
</dbReference>
<dbReference type="CDD" id="cd00069">
    <property type="entry name" value="GHB_like"/>
    <property type="match status" value="1"/>
</dbReference>
<dbReference type="FunFam" id="2.10.90.10:FF:000029">
    <property type="entry name" value="glycoprotein hormone beta-5"/>
    <property type="match status" value="1"/>
</dbReference>
<dbReference type="Gene3D" id="2.10.90.10">
    <property type="entry name" value="Cystine-knot cytokines"/>
    <property type="match status" value="1"/>
</dbReference>
<dbReference type="InterPro" id="IPR029034">
    <property type="entry name" value="Cystine-knot_cytokine"/>
</dbReference>
<dbReference type="InterPro" id="IPR006208">
    <property type="entry name" value="Glyco_hormone_CN"/>
</dbReference>
<dbReference type="InterPro" id="IPR001545">
    <property type="entry name" value="Gonadotropin_bsu"/>
</dbReference>
<dbReference type="PANTHER" id="PTHR11515">
    <property type="entry name" value="GLYCOPROTEIN HORMONE BETA CHAIN"/>
    <property type="match status" value="1"/>
</dbReference>
<dbReference type="PANTHER" id="PTHR11515:SF14">
    <property type="entry name" value="GLYCOPROTEIN HORMONE BETA-5"/>
    <property type="match status" value="1"/>
</dbReference>
<dbReference type="Pfam" id="PF00007">
    <property type="entry name" value="Cys_knot"/>
    <property type="match status" value="1"/>
</dbReference>
<dbReference type="SMART" id="SM00068">
    <property type="entry name" value="GHB"/>
    <property type="match status" value="1"/>
</dbReference>
<dbReference type="SUPFAM" id="SSF57501">
    <property type="entry name" value="Cystine-knot cytokines"/>
    <property type="match status" value="1"/>
</dbReference>
<comment type="function">
    <text evidence="2">Functions as a heterodimeric glycoprotein hormone with GPHA2 able to bind and activate the thyroid-stimulating hormone receptor (TSHR), leading to increased cAMP production. Plays a central role in controlling thyroid cell metabolism.</text>
</comment>
<comment type="subunit">
    <text evidence="2">Heterodimer with GPHA2; this heterodimer interacts with thyroid-stimulating hormone receptor (TSHR), and hence stimulates cAMP production.</text>
</comment>
<comment type="subcellular location">
    <subcellularLocation>
        <location evidence="1">Secreted</location>
    </subcellularLocation>
</comment>
<comment type="tissue specificity">
    <text>Expressed in the anterior lobe of pituitary.</text>
</comment>
<comment type="PTM">
    <text evidence="2">N-glycosylated.</text>
</comment>
<comment type="miscellaneous">
    <text>Overexpression of Gphb5 results in proptosis, elevated serum T4 levels and significantly reduced body weight.</text>
</comment>
<comment type="similarity">
    <text evidence="4">Belongs to the glycoprotein hormones subunit beta family.</text>
</comment>
<comment type="sequence caution" evidence="4">
    <conflict type="frameshift">
        <sequence resource="EMBL" id="AK078727"/>
    </conflict>
</comment>
<name>GPHB5_MOUSE</name>
<gene>
    <name type="primary">Gphb5</name>
    <name type="synonym">Gpb5</name>
    <name type="synonym">Zlut1</name>
</gene>
<proteinExistence type="evidence at transcript level"/>
<sequence length="130" mass="14249">MKLVYLVLGAVALLLLGGPDSVLSSSSGNLHTFVGCAVREFTFMAKKPGCRGLRITTDACWGRCETWEKPILEPPYIEAYHRVCTYNETRQVTVKLPNCAPGVDPFYTYPMAVRCDCGACSTATTECETI</sequence>
<protein>
    <recommendedName>
        <fullName>Glycoprotein hormone beta-5</fullName>
    </recommendedName>
    <alternativeName>
        <fullName>Thyrostimulin subunit beta</fullName>
    </alternativeName>
</protein>
<feature type="signal peptide" evidence="3">
    <location>
        <begin position="1"/>
        <end position="24"/>
    </location>
</feature>
<feature type="chain" id="PRO_0000011762" description="Glycoprotein hormone beta-5">
    <location>
        <begin position="25"/>
        <end position="130"/>
    </location>
</feature>
<feature type="glycosylation site" description="N-linked (GlcNAc...) asparagine" evidence="3">
    <location>
        <position position="87"/>
    </location>
</feature>
<feature type="disulfide bond" evidence="1">
    <location>
        <begin position="36"/>
        <end position="84"/>
    </location>
</feature>
<feature type="disulfide bond" evidence="1">
    <location>
        <begin position="50"/>
        <end position="99"/>
    </location>
</feature>
<feature type="disulfide bond" evidence="1">
    <location>
        <begin position="60"/>
        <end position="115"/>
    </location>
</feature>
<feature type="disulfide bond" evidence="1">
    <location>
        <begin position="64"/>
        <end position="117"/>
    </location>
</feature>
<feature type="disulfide bond" evidence="1">
    <location>
        <begin position="120"/>
        <end position="127"/>
    </location>
</feature>
<organism>
    <name type="scientific">Mus musculus</name>
    <name type="common">Mouse</name>
    <dbReference type="NCBI Taxonomy" id="10090"/>
    <lineage>
        <taxon>Eukaryota</taxon>
        <taxon>Metazoa</taxon>
        <taxon>Chordata</taxon>
        <taxon>Craniata</taxon>
        <taxon>Vertebrata</taxon>
        <taxon>Euteleostomi</taxon>
        <taxon>Mammalia</taxon>
        <taxon>Eutheria</taxon>
        <taxon>Euarchontoglires</taxon>
        <taxon>Glires</taxon>
        <taxon>Rodentia</taxon>
        <taxon>Myomorpha</taxon>
        <taxon>Muroidea</taxon>
        <taxon>Muridae</taxon>
        <taxon>Murinae</taxon>
        <taxon>Mus</taxon>
        <taxon>Mus</taxon>
    </lineage>
</organism>
<accession>Q812B2</accession>
<accession>Q8BJV2</accession>